<proteinExistence type="inferred from homology"/>
<feature type="chain" id="PRO_0000257202" description="UDP-N-acetylmuramoylalanine--D-glutamate ligase">
    <location>
        <begin position="1"/>
        <end position="467"/>
    </location>
</feature>
<feature type="binding site" evidence="1">
    <location>
        <begin position="121"/>
        <end position="127"/>
    </location>
    <ligand>
        <name>ATP</name>
        <dbReference type="ChEBI" id="CHEBI:30616"/>
    </ligand>
</feature>
<dbReference type="EC" id="6.3.2.9" evidence="1"/>
<dbReference type="EMBL" id="CP000390">
    <property type="protein sequence ID" value="ABG63402.1"/>
    <property type="molecule type" value="Genomic_DNA"/>
</dbReference>
<dbReference type="SMR" id="Q11GS3"/>
<dbReference type="STRING" id="266779.Meso_2009"/>
<dbReference type="KEGG" id="mes:Meso_2009"/>
<dbReference type="eggNOG" id="COG0771">
    <property type="taxonomic scope" value="Bacteria"/>
</dbReference>
<dbReference type="HOGENOM" id="CLU_032540_3_0_5"/>
<dbReference type="OrthoDB" id="9809796at2"/>
<dbReference type="UniPathway" id="UPA00219"/>
<dbReference type="GO" id="GO:0005737">
    <property type="term" value="C:cytoplasm"/>
    <property type="evidence" value="ECO:0007669"/>
    <property type="project" value="UniProtKB-SubCell"/>
</dbReference>
<dbReference type="GO" id="GO:0005524">
    <property type="term" value="F:ATP binding"/>
    <property type="evidence" value="ECO:0007669"/>
    <property type="project" value="UniProtKB-UniRule"/>
</dbReference>
<dbReference type="GO" id="GO:0004326">
    <property type="term" value="F:tetrahydrofolylpolyglutamate synthase activity"/>
    <property type="evidence" value="ECO:0007669"/>
    <property type="project" value="InterPro"/>
</dbReference>
<dbReference type="GO" id="GO:0008764">
    <property type="term" value="F:UDP-N-acetylmuramoylalanine-D-glutamate ligase activity"/>
    <property type="evidence" value="ECO:0007669"/>
    <property type="project" value="UniProtKB-UniRule"/>
</dbReference>
<dbReference type="GO" id="GO:0051301">
    <property type="term" value="P:cell division"/>
    <property type="evidence" value="ECO:0007669"/>
    <property type="project" value="UniProtKB-KW"/>
</dbReference>
<dbReference type="GO" id="GO:0071555">
    <property type="term" value="P:cell wall organization"/>
    <property type="evidence" value="ECO:0007669"/>
    <property type="project" value="UniProtKB-KW"/>
</dbReference>
<dbReference type="GO" id="GO:0009252">
    <property type="term" value="P:peptidoglycan biosynthetic process"/>
    <property type="evidence" value="ECO:0007669"/>
    <property type="project" value="UniProtKB-UniRule"/>
</dbReference>
<dbReference type="GO" id="GO:0008360">
    <property type="term" value="P:regulation of cell shape"/>
    <property type="evidence" value="ECO:0007669"/>
    <property type="project" value="UniProtKB-KW"/>
</dbReference>
<dbReference type="Gene3D" id="3.90.190.20">
    <property type="entry name" value="Mur ligase, C-terminal domain"/>
    <property type="match status" value="1"/>
</dbReference>
<dbReference type="Gene3D" id="3.40.1190.10">
    <property type="entry name" value="Mur-like, catalytic domain"/>
    <property type="match status" value="1"/>
</dbReference>
<dbReference type="Gene3D" id="3.40.50.720">
    <property type="entry name" value="NAD(P)-binding Rossmann-like Domain"/>
    <property type="match status" value="1"/>
</dbReference>
<dbReference type="HAMAP" id="MF_00639">
    <property type="entry name" value="MurD"/>
    <property type="match status" value="1"/>
</dbReference>
<dbReference type="InterPro" id="IPR018109">
    <property type="entry name" value="Folylpolyglutamate_synth_CS"/>
</dbReference>
<dbReference type="InterPro" id="IPR036565">
    <property type="entry name" value="Mur-like_cat_sf"/>
</dbReference>
<dbReference type="InterPro" id="IPR036615">
    <property type="entry name" value="Mur_ligase_C_dom_sf"/>
</dbReference>
<dbReference type="InterPro" id="IPR013221">
    <property type="entry name" value="Mur_ligase_cen"/>
</dbReference>
<dbReference type="InterPro" id="IPR005762">
    <property type="entry name" value="MurD"/>
</dbReference>
<dbReference type="NCBIfam" id="TIGR01087">
    <property type="entry name" value="murD"/>
    <property type="match status" value="1"/>
</dbReference>
<dbReference type="PANTHER" id="PTHR43692">
    <property type="entry name" value="UDP-N-ACETYLMURAMOYLALANINE--D-GLUTAMATE LIGASE"/>
    <property type="match status" value="1"/>
</dbReference>
<dbReference type="PANTHER" id="PTHR43692:SF1">
    <property type="entry name" value="UDP-N-ACETYLMURAMOYLALANINE--D-GLUTAMATE LIGASE"/>
    <property type="match status" value="1"/>
</dbReference>
<dbReference type="Pfam" id="PF08245">
    <property type="entry name" value="Mur_ligase_M"/>
    <property type="match status" value="1"/>
</dbReference>
<dbReference type="SUPFAM" id="SSF51984">
    <property type="entry name" value="MurCD N-terminal domain"/>
    <property type="match status" value="1"/>
</dbReference>
<dbReference type="SUPFAM" id="SSF53623">
    <property type="entry name" value="MurD-like peptide ligases, catalytic domain"/>
    <property type="match status" value="1"/>
</dbReference>
<dbReference type="SUPFAM" id="SSF53244">
    <property type="entry name" value="MurD-like peptide ligases, peptide-binding domain"/>
    <property type="match status" value="1"/>
</dbReference>
<reference key="1">
    <citation type="submission" date="2006-06" db="EMBL/GenBank/DDBJ databases">
        <title>Complete sequence of chromosome of Mesorhizobium sp. BNC1.</title>
        <authorList>
            <consortium name="US DOE Joint Genome Institute"/>
            <person name="Copeland A."/>
            <person name="Lucas S."/>
            <person name="Lapidus A."/>
            <person name="Barry K."/>
            <person name="Detter J.C."/>
            <person name="Glavina del Rio T."/>
            <person name="Hammon N."/>
            <person name="Israni S."/>
            <person name="Dalin E."/>
            <person name="Tice H."/>
            <person name="Pitluck S."/>
            <person name="Chertkov O."/>
            <person name="Brettin T."/>
            <person name="Bruce D."/>
            <person name="Han C."/>
            <person name="Tapia R."/>
            <person name="Gilna P."/>
            <person name="Schmutz J."/>
            <person name="Larimer F."/>
            <person name="Land M."/>
            <person name="Hauser L."/>
            <person name="Kyrpides N."/>
            <person name="Mikhailova N."/>
            <person name="Richardson P."/>
        </authorList>
    </citation>
    <scope>NUCLEOTIDE SEQUENCE [LARGE SCALE GENOMIC DNA]</scope>
    <source>
        <strain>BNC1</strain>
    </source>
</reference>
<comment type="function">
    <text evidence="1">Cell wall formation. Catalyzes the addition of glutamate to the nucleotide precursor UDP-N-acetylmuramoyl-L-alanine (UMA).</text>
</comment>
<comment type="catalytic activity">
    <reaction evidence="1">
        <text>UDP-N-acetyl-alpha-D-muramoyl-L-alanine + D-glutamate + ATP = UDP-N-acetyl-alpha-D-muramoyl-L-alanyl-D-glutamate + ADP + phosphate + H(+)</text>
        <dbReference type="Rhea" id="RHEA:16429"/>
        <dbReference type="ChEBI" id="CHEBI:15378"/>
        <dbReference type="ChEBI" id="CHEBI:29986"/>
        <dbReference type="ChEBI" id="CHEBI:30616"/>
        <dbReference type="ChEBI" id="CHEBI:43474"/>
        <dbReference type="ChEBI" id="CHEBI:83898"/>
        <dbReference type="ChEBI" id="CHEBI:83900"/>
        <dbReference type="ChEBI" id="CHEBI:456216"/>
        <dbReference type="EC" id="6.3.2.9"/>
    </reaction>
</comment>
<comment type="pathway">
    <text evidence="1">Cell wall biogenesis; peptidoglycan biosynthesis.</text>
</comment>
<comment type="subcellular location">
    <subcellularLocation>
        <location evidence="1">Cytoplasm</location>
    </subcellularLocation>
</comment>
<comment type="similarity">
    <text evidence="1">Belongs to the MurCDEF family.</text>
</comment>
<evidence type="ECO:0000255" key="1">
    <source>
        <dbReference type="HAMAP-Rule" id="MF_00639"/>
    </source>
</evidence>
<sequence length="467" mass="49161">MIPATTFHGRQVALFGLGGSGIATAQAIMAGGGEVLAWDDNPESVAKAKAEGIKTGDLRDADWRSIHTLLLAPGVPLTHPHPHWSVELARSAGVEIIGDIELFVRERRMHAAHAPLVAITGTNGKSTTTALTAHVLKAAGRDTQMGGNIGRAVMTLDPPVADRHYVLECSSYQIDLSPTLNPTAGVLLNITPDHLDRHGTMENYAAIKERLVAGSDTAIIGVDDEYCRAVADRLEKAGRKVSRISLTGTLEDGFFADGTQLFRAGQGKAEPLFSLEGIGSLRGRHNAQNALAAAAACLACGLSPAEIQTGFRSFPGLAHRMEQVGKLGHVLFVNDSKATNADASAPALSSFPRIYWIAGGLPKAGGIASLRQYFPRIAKAYLIGEAAPAFAATIGEATNYEISGTIAAAVQHAARDAADDPAGDVVVLLSPACASFDQFRNFEVRGEAFRDAVRALPGIELIGEKRA</sequence>
<accession>Q11GS3</accession>
<protein>
    <recommendedName>
        <fullName evidence="1">UDP-N-acetylmuramoylalanine--D-glutamate ligase</fullName>
        <ecNumber evidence="1">6.3.2.9</ecNumber>
    </recommendedName>
    <alternativeName>
        <fullName evidence="1">D-glutamic acid-adding enzyme</fullName>
    </alternativeName>
    <alternativeName>
        <fullName evidence="1">UDP-N-acetylmuramoyl-L-alanyl-D-glutamate synthetase</fullName>
    </alternativeName>
</protein>
<organism>
    <name type="scientific">Chelativorans sp. (strain BNC1)</name>
    <dbReference type="NCBI Taxonomy" id="266779"/>
    <lineage>
        <taxon>Bacteria</taxon>
        <taxon>Pseudomonadati</taxon>
        <taxon>Pseudomonadota</taxon>
        <taxon>Alphaproteobacteria</taxon>
        <taxon>Hyphomicrobiales</taxon>
        <taxon>Phyllobacteriaceae</taxon>
        <taxon>Chelativorans</taxon>
    </lineage>
</organism>
<keyword id="KW-0067">ATP-binding</keyword>
<keyword id="KW-0131">Cell cycle</keyword>
<keyword id="KW-0132">Cell division</keyword>
<keyword id="KW-0133">Cell shape</keyword>
<keyword id="KW-0961">Cell wall biogenesis/degradation</keyword>
<keyword id="KW-0963">Cytoplasm</keyword>
<keyword id="KW-0436">Ligase</keyword>
<keyword id="KW-0547">Nucleotide-binding</keyword>
<keyword id="KW-0573">Peptidoglycan synthesis</keyword>
<name>MURD_CHESB</name>
<gene>
    <name evidence="1" type="primary">murD</name>
    <name type="ordered locus">Meso_2009</name>
</gene>